<keyword id="KW-0963">Cytoplasm</keyword>
<keyword id="KW-0690">Ribosome biogenesis</keyword>
<gene>
    <name evidence="1" type="primary">rbfA</name>
    <name type="ordered locus">BruAb1_2139</name>
</gene>
<evidence type="ECO:0000255" key="1">
    <source>
        <dbReference type="HAMAP-Rule" id="MF_00003"/>
    </source>
</evidence>
<evidence type="ECO:0000256" key="2">
    <source>
        <dbReference type="SAM" id="MobiDB-lite"/>
    </source>
</evidence>
<proteinExistence type="inferred from homology"/>
<sequence length="150" mass="16573">MARSHDTKGSGGLSQRQLRVGEQVRHALAQVLQRGEIRDDLIERTVISVSEVRMSPDLKIATCFITPLGSADPQAVIKALASHAKFIRGRVAPSLAQMKYMPEFRFRPDTSFDNFSKIDALLRSPEVARDLSHDDDEDGGADEAPRNGDE</sequence>
<dbReference type="EMBL" id="AE017223">
    <property type="protein sequence ID" value="AAX75435.1"/>
    <property type="molecule type" value="Genomic_DNA"/>
</dbReference>
<dbReference type="RefSeq" id="WP_002965228.1">
    <property type="nucleotide sequence ID" value="NC_006932.1"/>
</dbReference>
<dbReference type="SMR" id="Q57A99"/>
<dbReference type="EnsemblBacteria" id="AAX75435">
    <property type="protein sequence ID" value="AAX75435"/>
    <property type="gene ID" value="BruAb1_2139"/>
</dbReference>
<dbReference type="GeneID" id="97534581"/>
<dbReference type="KEGG" id="bmb:BruAb1_2139"/>
<dbReference type="HOGENOM" id="CLU_089475_1_0_5"/>
<dbReference type="Proteomes" id="UP000000540">
    <property type="component" value="Chromosome I"/>
</dbReference>
<dbReference type="GO" id="GO:0005829">
    <property type="term" value="C:cytosol"/>
    <property type="evidence" value="ECO:0007669"/>
    <property type="project" value="TreeGrafter"/>
</dbReference>
<dbReference type="GO" id="GO:0043024">
    <property type="term" value="F:ribosomal small subunit binding"/>
    <property type="evidence" value="ECO:0007669"/>
    <property type="project" value="TreeGrafter"/>
</dbReference>
<dbReference type="GO" id="GO:0030490">
    <property type="term" value="P:maturation of SSU-rRNA"/>
    <property type="evidence" value="ECO:0007669"/>
    <property type="project" value="UniProtKB-UniRule"/>
</dbReference>
<dbReference type="Gene3D" id="3.30.300.20">
    <property type="match status" value="1"/>
</dbReference>
<dbReference type="HAMAP" id="MF_00003">
    <property type="entry name" value="RbfA"/>
    <property type="match status" value="1"/>
</dbReference>
<dbReference type="InterPro" id="IPR015946">
    <property type="entry name" value="KH_dom-like_a/b"/>
</dbReference>
<dbReference type="InterPro" id="IPR000238">
    <property type="entry name" value="RbfA"/>
</dbReference>
<dbReference type="InterPro" id="IPR023799">
    <property type="entry name" value="RbfA_dom_sf"/>
</dbReference>
<dbReference type="InterPro" id="IPR020053">
    <property type="entry name" value="Ribosome-bd_factorA_CS"/>
</dbReference>
<dbReference type="NCBIfam" id="NF001802">
    <property type="entry name" value="PRK00521.2-5"/>
    <property type="match status" value="1"/>
</dbReference>
<dbReference type="NCBIfam" id="TIGR00082">
    <property type="entry name" value="rbfA"/>
    <property type="match status" value="1"/>
</dbReference>
<dbReference type="PANTHER" id="PTHR33515">
    <property type="entry name" value="RIBOSOME-BINDING FACTOR A, CHLOROPLASTIC-RELATED"/>
    <property type="match status" value="1"/>
</dbReference>
<dbReference type="PANTHER" id="PTHR33515:SF1">
    <property type="entry name" value="RIBOSOME-BINDING FACTOR A, CHLOROPLASTIC-RELATED"/>
    <property type="match status" value="1"/>
</dbReference>
<dbReference type="Pfam" id="PF02033">
    <property type="entry name" value="RBFA"/>
    <property type="match status" value="1"/>
</dbReference>
<dbReference type="SUPFAM" id="SSF89919">
    <property type="entry name" value="Ribosome-binding factor A, RbfA"/>
    <property type="match status" value="1"/>
</dbReference>
<dbReference type="PROSITE" id="PS01319">
    <property type="entry name" value="RBFA"/>
    <property type="match status" value="1"/>
</dbReference>
<protein>
    <recommendedName>
        <fullName evidence="1">Ribosome-binding factor A</fullName>
    </recommendedName>
</protein>
<accession>Q57A99</accession>
<organism>
    <name type="scientific">Brucella abortus biovar 1 (strain 9-941)</name>
    <dbReference type="NCBI Taxonomy" id="262698"/>
    <lineage>
        <taxon>Bacteria</taxon>
        <taxon>Pseudomonadati</taxon>
        <taxon>Pseudomonadota</taxon>
        <taxon>Alphaproteobacteria</taxon>
        <taxon>Hyphomicrobiales</taxon>
        <taxon>Brucellaceae</taxon>
        <taxon>Brucella/Ochrobactrum group</taxon>
        <taxon>Brucella</taxon>
    </lineage>
</organism>
<reference key="1">
    <citation type="journal article" date="2005" name="J. Bacteriol.">
        <title>Completion of the genome sequence of Brucella abortus and comparison to the highly similar genomes of Brucella melitensis and Brucella suis.</title>
        <authorList>
            <person name="Halling S.M."/>
            <person name="Peterson-Burch B.D."/>
            <person name="Bricker B.J."/>
            <person name="Zuerner R.L."/>
            <person name="Qing Z."/>
            <person name="Li L.-L."/>
            <person name="Kapur V."/>
            <person name="Alt D.P."/>
            <person name="Olsen S.C."/>
        </authorList>
    </citation>
    <scope>NUCLEOTIDE SEQUENCE [LARGE SCALE GENOMIC DNA]</scope>
    <source>
        <strain>9-941</strain>
    </source>
</reference>
<name>RBFA_BRUAB</name>
<feature type="chain" id="PRO_1000000079" description="Ribosome-binding factor A">
    <location>
        <begin position="1"/>
        <end position="150"/>
    </location>
</feature>
<feature type="region of interest" description="Disordered" evidence="2">
    <location>
        <begin position="126"/>
        <end position="150"/>
    </location>
</feature>
<comment type="function">
    <text evidence="1">One of several proteins that assist in the late maturation steps of the functional core of the 30S ribosomal subunit. Associates with free 30S ribosomal subunits (but not with 30S subunits that are part of 70S ribosomes or polysomes). Required for efficient processing of 16S rRNA. May interact with the 5'-terminal helix region of 16S rRNA.</text>
</comment>
<comment type="subunit">
    <text evidence="1">Monomer. Binds 30S ribosomal subunits, but not 50S ribosomal subunits or 70S ribosomes.</text>
</comment>
<comment type="subcellular location">
    <subcellularLocation>
        <location evidence="1">Cytoplasm</location>
    </subcellularLocation>
</comment>
<comment type="similarity">
    <text evidence="1">Belongs to the RbfA family.</text>
</comment>